<sequence length="361" mass="40401">MTDKIKVGLIFGGNSSEYEVSIMSAHNIYEEIDTNKFDVYPMWITNDGYLANDADSRKVLDNPKMEVANPHKVANISNIVELKDRPEIDVFFPIVHGNLGEDGCLQGLFRVLDKPFVGDDVLAAAVTMDKEMTKILAQRAGVPVAKWIAVKRFEYNDPDNNKLDYEYVASQLGSDLFVKPSNQGSSVGVSHVTNEKEYKVALAEAFKYDDKVLVEETVHGTEVETAVLGNDKPIVAGVGQIINAKDSFYTYENKYDDNSTSTLEIPAKLPEGIVEKVRKNALKVFQATECSGLARIDSMLRTEDKEVVLTEVNALPGFTNISMYPKLFEEVGIPYTDLITKLIDYAMERYDHKKTLLHKHD</sequence>
<feature type="chain" id="PRO_0000341119" description="D-alanine--D-alanine ligase">
    <location>
        <begin position="1"/>
        <end position="361"/>
    </location>
</feature>
<feature type="domain" description="ATP-grasp" evidence="2">
    <location>
        <begin position="134"/>
        <end position="344"/>
    </location>
</feature>
<feature type="binding site" evidence="2">
    <location>
        <begin position="169"/>
        <end position="224"/>
    </location>
    <ligand>
        <name>ATP</name>
        <dbReference type="ChEBI" id="CHEBI:30616"/>
    </ligand>
</feature>
<feature type="binding site" evidence="2">
    <location>
        <position position="297"/>
    </location>
    <ligand>
        <name>Mg(2+)</name>
        <dbReference type="ChEBI" id="CHEBI:18420"/>
        <label>1</label>
    </ligand>
</feature>
<feature type="binding site" evidence="2">
    <location>
        <position position="311"/>
    </location>
    <ligand>
        <name>Mg(2+)</name>
        <dbReference type="ChEBI" id="CHEBI:18420"/>
        <label>1</label>
    </ligand>
</feature>
<feature type="binding site" evidence="2">
    <location>
        <position position="311"/>
    </location>
    <ligand>
        <name>Mg(2+)</name>
        <dbReference type="ChEBI" id="CHEBI:18420"/>
        <label>2</label>
    </ligand>
</feature>
<feature type="binding site" evidence="2">
    <location>
        <position position="313"/>
    </location>
    <ligand>
        <name>Mg(2+)</name>
        <dbReference type="ChEBI" id="CHEBI:18420"/>
        <label>2</label>
    </ligand>
</feature>
<accession>Q046V3</accession>
<keyword id="KW-0067">ATP-binding</keyword>
<keyword id="KW-0133">Cell shape</keyword>
<keyword id="KW-0961">Cell wall biogenesis/degradation</keyword>
<keyword id="KW-0963">Cytoplasm</keyword>
<keyword id="KW-0436">Ligase</keyword>
<keyword id="KW-0460">Magnesium</keyword>
<keyword id="KW-0464">Manganese</keyword>
<keyword id="KW-0479">Metal-binding</keyword>
<keyword id="KW-0547">Nucleotide-binding</keyword>
<keyword id="KW-0573">Peptidoglycan synthesis</keyword>
<protein>
    <recommendedName>
        <fullName evidence="2">D-alanine--D-alanine ligase</fullName>
        <ecNumber evidence="2">6.3.2.4</ecNumber>
    </recommendedName>
    <alternativeName>
        <fullName evidence="2">D-Ala-D-Ala ligase</fullName>
    </alternativeName>
    <alternativeName>
        <fullName evidence="2">D-alanylalanine synthetase</fullName>
    </alternativeName>
</protein>
<proteinExistence type="inferred from homology"/>
<name>DDL_LACGA</name>
<comment type="function">
    <text evidence="2">Cell wall formation.</text>
</comment>
<comment type="catalytic activity">
    <reaction evidence="2">
        <text>2 D-alanine + ATP = D-alanyl-D-alanine + ADP + phosphate + H(+)</text>
        <dbReference type="Rhea" id="RHEA:11224"/>
        <dbReference type="ChEBI" id="CHEBI:15378"/>
        <dbReference type="ChEBI" id="CHEBI:30616"/>
        <dbReference type="ChEBI" id="CHEBI:43474"/>
        <dbReference type="ChEBI" id="CHEBI:57416"/>
        <dbReference type="ChEBI" id="CHEBI:57822"/>
        <dbReference type="ChEBI" id="CHEBI:456216"/>
        <dbReference type="EC" id="6.3.2.4"/>
    </reaction>
</comment>
<comment type="cofactor">
    <cofactor evidence="1">
        <name>Mg(2+)</name>
        <dbReference type="ChEBI" id="CHEBI:18420"/>
    </cofactor>
    <cofactor evidence="1">
        <name>Mn(2+)</name>
        <dbReference type="ChEBI" id="CHEBI:29035"/>
    </cofactor>
    <text evidence="1">Binds 2 magnesium or manganese ions per subunit.</text>
</comment>
<comment type="pathway">
    <text evidence="2">Cell wall biogenesis; peptidoglycan biosynthesis.</text>
</comment>
<comment type="subcellular location">
    <subcellularLocation>
        <location evidence="2">Cytoplasm</location>
    </subcellularLocation>
</comment>
<comment type="similarity">
    <text evidence="2">Belongs to the D-alanine--D-alanine ligase family.</text>
</comment>
<comment type="sequence caution" evidence="3">
    <conflict type="erroneous initiation">
        <sequence resource="EMBL-CDS" id="ABJ59519"/>
    </conflict>
</comment>
<evidence type="ECO:0000250" key="1"/>
<evidence type="ECO:0000255" key="2">
    <source>
        <dbReference type="HAMAP-Rule" id="MF_00047"/>
    </source>
</evidence>
<evidence type="ECO:0000305" key="3"/>
<reference key="1">
    <citation type="journal article" date="2006" name="Proc. Natl. Acad. Sci. U.S.A.">
        <title>Comparative genomics of the lactic acid bacteria.</title>
        <authorList>
            <person name="Makarova K.S."/>
            <person name="Slesarev A."/>
            <person name="Wolf Y.I."/>
            <person name="Sorokin A."/>
            <person name="Mirkin B."/>
            <person name="Koonin E.V."/>
            <person name="Pavlov A."/>
            <person name="Pavlova N."/>
            <person name="Karamychev V."/>
            <person name="Polouchine N."/>
            <person name="Shakhova V."/>
            <person name="Grigoriev I."/>
            <person name="Lou Y."/>
            <person name="Rohksar D."/>
            <person name="Lucas S."/>
            <person name="Huang K."/>
            <person name="Goodstein D.M."/>
            <person name="Hawkins T."/>
            <person name="Plengvidhya V."/>
            <person name="Welker D."/>
            <person name="Hughes J."/>
            <person name="Goh Y."/>
            <person name="Benson A."/>
            <person name="Baldwin K."/>
            <person name="Lee J.-H."/>
            <person name="Diaz-Muniz I."/>
            <person name="Dosti B."/>
            <person name="Smeianov V."/>
            <person name="Wechter W."/>
            <person name="Barabote R."/>
            <person name="Lorca G."/>
            <person name="Altermann E."/>
            <person name="Barrangou R."/>
            <person name="Ganesan B."/>
            <person name="Xie Y."/>
            <person name="Rawsthorne H."/>
            <person name="Tamir D."/>
            <person name="Parker C."/>
            <person name="Breidt F."/>
            <person name="Broadbent J.R."/>
            <person name="Hutkins R."/>
            <person name="O'Sullivan D."/>
            <person name="Steele J."/>
            <person name="Unlu G."/>
            <person name="Saier M.H. Jr."/>
            <person name="Klaenhammer T."/>
            <person name="Richardson P."/>
            <person name="Kozyavkin S."/>
            <person name="Weimer B.C."/>
            <person name="Mills D.A."/>
        </authorList>
    </citation>
    <scope>NUCLEOTIDE SEQUENCE [LARGE SCALE GENOMIC DNA]</scope>
    <source>
        <strain>ATCC 33323 / DSM 20243 / BCRC 14619 / CIP 102991 / JCM 1131 / KCTC 3163 / NCIMB 11718 / NCTC 13722 / AM63</strain>
    </source>
</reference>
<gene>
    <name evidence="2" type="primary">ddl</name>
    <name type="ordered locus">LGAS_0107</name>
</gene>
<dbReference type="EC" id="6.3.2.4" evidence="2"/>
<dbReference type="EMBL" id="CP000413">
    <property type="protein sequence ID" value="ABJ59519.1"/>
    <property type="status" value="ALT_INIT"/>
    <property type="molecule type" value="Genomic_DNA"/>
</dbReference>
<dbReference type="RefSeq" id="WP_003647974.1">
    <property type="nucleotide sequence ID" value="NZ_WBMG01000001.1"/>
</dbReference>
<dbReference type="SMR" id="Q046V3"/>
<dbReference type="GeneID" id="29640201"/>
<dbReference type="KEGG" id="lga:LGAS_0107"/>
<dbReference type="HOGENOM" id="CLU_039268_0_0_9"/>
<dbReference type="BioCyc" id="LGAS324831:G1G6Y-105-MONOMER"/>
<dbReference type="UniPathway" id="UPA00219"/>
<dbReference type="Proteomes" id="UP000000664">
    <property type="component" value="Chromosome"/>
</dbReference>
<dbReference type="GO" id="GO:0005829">
    <property type="term" value="C:cytosol"/>
    <property type="evidence" value="ECO:0007669"/>
    <property type="project" value="TreeGrafter"/>
</dbReference>
<dbReference type="GO" id="GO:0005524">
    <property type="term" value="F:ATP binding"/>
    <property type="evidence" value="ECO:0007669"/>
    <property type="project" value="UniProtKB-KW"/>
</dbReference>
<dbReference type="GO" id="GO:0008716">
    <property type="term" value="F:D-alanine-D-alanine ligase activity"/>
    <property type="evidence" value="ECO:0007669"/>
    <property type="project" value="UniProtKB-UniRule"/>
</dbReference>
<dbReference type="GO" id="GO:0046872">
    <property type="term" value="F:metal ion binding"/>
    <property type="evidence" value="ECO:0007669"/>
    <property type="project" value="UniProtKB-KW"/>
</dbReference>
<dbReference type="GO" id="GO:0071555">
    <property type="term" value="P:cell wall organization"/>
    <property type="evidence" value="ECO:0007669"/>
    <property type="project" value="UniProtKB-KW"/>
</dbReference>
<dbReference type="GO" id="GO:0009252">
    <property type="term" value="P:peptidoglycan biosynthetic process"/>
    <property type="evidence" value="ECO:0007669"/>
    <property type="project" value="UniProtKB-UniRule"/>
</dbReference>
<dbReference type="GO" id="GO:0008360">
    <property type="term" value="P:regulation of cell shape"/>
    <property type="evidence" value="ECO:0007669"/>
    <property type="project" value="UniProtKB-KW"/>
</dbReference>
<dbReference type="FunFam" id="3.30.1490.20:FF:000007">
    <property type="entry name" value="D-alanine--D-alanine ligase"/>
    <property type="match status" value="1"/>
</dbReference>
<dbReference type="FunFam" id="3.30.470.20:FF:000008">
    <property type="entry name" value="D-alanine--D-alanine ligase"/>
    <property type="match status" value="1"/>
</dbReference>
<dbReference type="Gene3D" id="3.40.50.20">
    <property type="match status" value="1"/>
</dbReference>
<dbReference type="Gene3D" id="3.30.1490.20">
    <property type="entry name" value="ATP-grasp fold, A domain"/>
    <property type="match status" value="1"/>
</dbReference>
<dbReference type="Gene3D" id="3.30.470.20">
    <property type="entry name" value="ATP-grasp fold, B domain"/>
    <property type="match status" value="1"/>
</dbReference>
<dbReference type="HAMAP" id="MF_00047">
    <property type="entry name" value="Dala_Dala_lig"/>
    <property type="match status" value="1"/>
</dbReference>
<dbReference type="InterPro" id="IPR011761">
    <property type="entry name" value="ATP-grasp"/>
</dbReference>
<dbReference type="InterPro" id="IPR013815">
    <property type="entry name" value="ATP_grasp_subdomain_1"/>
</dbReference>
<dbReference type="InterPro" id="IPR000291">
    <property type="entry name" value="D-Ala_lig_Van_CS"/>
</dbReference>
<dbReference type="InterPro" id="IPR005905">
    <property type="entry name" value="D_ala_D_ala"/>
</dbReference>
<dbReference type="InterPro" id="IPR011095">
    <property type="entry name" value="Dala_Dala_lig_C"/>
</dbReference>
<dbReference type="InterPro" id="IPR011127">
    <property type="entry name" value="Dala_Dala_lig_N"/>
</dbReference>
<dbReference type="InterPro" id="IPR016185">
    <property type="entry name" value="PreATP-grasp_dom_sf"/>
</dbReference>
<dbReference type="NCBIfam" id="TIGR01205">
    <property type="entry name" value="D_ala_D_alaTIGR"/>
    <property type="match status" value="1"/>
</dbReference>
<dbReference type="NCBIfam" id="NF002528">
    <property type="entry name" value="PRK01966.1-4"/>
    <property type="match status" value="1"/>
</dbReference>
<dbReference type="PANTHER" id="PTHR23132">
    <property type="entry name" value="D-ALANINE--D-ALANINE LIGASE"/>
    <property type="match status" value="1"/>
</dbReference>
<dbReference type="PANTHER" id="PTHR23132:SF25">
    <property type="entry name" value="D-ALANINE--D-ALANINE LIGASE A"/>
    <property type="match status" value="1"/>
</dbReference>
<dbReference type="Pfam" id="PF07478">
    <property type="entry name" value="Dala_Dala_lig_C"/>
    <property type="match status" value="1"/>
</dbReference>
<dbReference type="Pfam" id="PF01820">
    <property type="entry name" value="Dala_Dala_lig_N"/>
    <property type="match status" value="1"/>
</dbReference>
<dbReference type="PIRSF" id="PIRSF039102">
    <property type="entry name" value="Ddl/VanB"/>
    <property type="match status" value="1"/>
</dbReference>
<dbReference type="SUPFAM" id="SSF56059">
    <property type="entry name" value="Glutathione synthetase ATP-binding domain-like"/>
    <property type="match status" value="1"/>
</dbReference>
<dbReference type="SUPFAM" id="SSF52440">
    <property type="entry name" value="PreATP-grasp domain"/>
    <property type="match status" value="1"/>
</dbReference>
<dbReference type="PROSITE" id="PS50975">
    <property type="entry name" value="ATP_GRASP"/>
    <property type="match status" value="1"/>
</dbReference>
<dbReference type="PROSITE" id="PS00843">
    <property type="entry name" value="DALA_DALA_LIGASE_1"/>
    <property type="match status" value="1"/>
</dbReference>
<organism>
    <name type="scientific">Lactobacillus gasseri (strain ATCC 33323 / DSM 20243 / BCRC 14619 / CIP 102991 / JCM 1131 / KCTC 3163 / NCIMB 11718 / NCTC 13722 / AM63)</name>
    <dbReference type="NCBI Taxonomy" id="324831"/>
    <lineage>
        <taxon>Bacteria</taxon>
        <taxon>Bacillati</taxon>
        <taxon>Bacillota</taxon>
        <taxon>Bacilli</taxon>
        <taxon>Lactobacillales</taxon>
        <taxon>Lactobacillaceae</taxon>
        <taxon>Lactobacillus</taxon>
    </lineage>
</organism>